<gene>
    <name type="primary">prp43</name>
    <name type="ORF">SPBC16H5.10c</name>
</gene>
<comment type="function">
    <text evidence="1">Pre-mRNA processing factor involved in disassembly of spliceosomes after the release of mature mRNA.</text>
</comment>
<comment type="catalytic activity">
    <reaction>
        <text>ATP + H2O = ADP + phosphate + H(+)</text>
        <dbReference type="Rhea" id="RHEA:13065"/>
        <dbReference type="ChEBI" id="CHEBI:15377"/>
        <dbReference type="ChEBI" id="CHEBI:15378"/>
        <dbReference type="ChEBI" id="CHEBI:30616"/>
        <dbReference type="ChEBI" id="CHEBI:43474"/>
        <dbReference type="ChEBI" id="CHEBI:456216"/>
        <dbReference type="EC" id="3.6.4.13"/>
    </reaction>
</comment>
<comment type="subcellular location">
    <subcellularLocation>
        <location evidence="5 6">Nucleus</location>
    </subcellularLocation>
</comment>
<comment type="similarity">
    <text evidence="7">Belongs to the DEAD box helicase family. DEAH subfamily. DDX15/PRP43 sub-subfamily.</text>
</comment>
<protein>
    <recommendedName>
        <fullName>Probable pre-mRNA-splicing factor ATP-dependent RNA helicase prp43</fullName>
        <ecNumber>3.6.4.13</ecNumber>
    </recommendedName>
</protein>
<evidence type="ECO:0000250" key="1"/>
<evidence type="ECO:0000255" key="2">
    <source>
        <dbReference type="PROSITE-ProRule" id="PRU00541"/>
    </source>
</evidence>
<evidence type="ECO:0000255" key="3">
    <source>
        <dbReference type="PROSITE-ProRule" id="PRU00542"/>
    </source>
</evidence>
<evidence type="ECO:0000256" key="4">
    <source>
        <dbReference type="SAM" id="MobiDB-lite"/>
    </source>
</evidence>
<evidence type="ECO:0000269" key="5">
    <source>
    </source>
</evidence>
<evidence type="ECO:0000269" key="6">
    <source>
    </source>
</evidence>
<evidence type="ECO:0000305" key="7"/>
<keyword id="KW-0067">ATP-binding</keyword>
<keyword id="KW-0347">Helicase</keyword>
<keyword id="KW-0378">Hydrolase</keyword>
<keyword id="KW-0507">mRNA processing</keyword>
<keyword id="KW-0508">mRNA splicing</keyword>
<keyword id="KW-0547">Nucleotide-binding</keyword>
<keyword id="KW-0539">Nucleus</keyword>
<keyword id="KW-1185">Reference proteome</keyword>
<reference key="1">
    <citation type="journal article" date="2002" name="Nature">
        <title>The genome sequence of Schizosaccharomyces pombe.</title>
        <authorList>
            <person name="Wood V."/>
            <person name="Gwilliam R."/>
            <person name="Rajandream M.A."/>
            <person name="Lyne M.H."/>
            <person name="Lyne R."/>
            <person name="Stewart A."/>
            <person name="Sgouros J.G."/>
            <person name="Peat N."/>
            <person name="Hayles J."/>
            <person name="Baker S.G."/>
            <person name="Basham D."/>
            <person name="Bowman S."/>
            <person name="Brooks K."/>
            <person name="Brown D."/>
            <person name="Brown S."/>
            <person name="Chillingworth T."/>
            <person name="Churcher C.M."/>
            <person name="Collins M."/>
            <person name="Connor R."/>
            <person name="Cronin A."/>
            <person name="Davis P."/>
            <person name="Feltwell T."/>
            <person name="Fraser A."/>
            <person name="Gentles S."/>
            <person name="Goble A."/>
            <person name="Hamlin N."/>
            <person name="Harris D.E."/>
            <person name="Hidalgo J."/>
            <person name="Hodgson G."/>
            <person name="Holroyd S."/>
            <person name="Hornsby T."/>
            <person name="Howarth S."/>
            <person name="Huckle E.J."/>
            <person name="Hunt S."/>
            <person name="Jagels K."/>
            <person name="James K.D."/>
            <person name="Jones L."/>
            <person name="Jones M."/>
            <person name="Leather S."/>
            <person name="McDonald S."/>
            <person name="McLean J."/>
            <person name="Mooney P."/>
            <person name="Moule S."/>
            <person name="Mungall K.L."/>
            <person name="Murphy L.D."/>
            <person name="Niblett D."/>
            <person name="Odell C."/>
            <person name="Oliver K."/>
            <person name="O'Neil S."/>
            <person name="Pearson D."/>
            <person name="Quail M.A."/>
            <person name="Rabbinowitsch E."/>
            <person name="Rutherford K.M."/>
            <person name="Rutter S."/>
            <person name="Saunders D."/>
            <person name="Seeger K."/>
            <person name="Sharp S."/>
            <person name="Skelton J."/>
            <person name="Simmonds M.N."/>
            <person name="Squares R."/>
            <person name="Squares S."/>
            <person name="Stevens K."/>
            <person name="Taylor K."/>
            <person name="Taylor R.G."/>
            <person name="Tivey A."/>
            <person name="Walsh S.V."/>
            <person name="Warren T."/>
            <person name="Whitehead S."/>
            <person name="Woodward J.R."/>
            <person name="Volckaert G."/>
            <person name="Aert R."/>
            <person name="Robben J."/>
            <person name="Grymonprez B."/>
            <person name="Weltjens I."/>
            <person name="Vanstreels E."/>
            <person name="Rieger M."/>
            <person name="Schaefer M."/>
            <person name="Mueller-Auer S."/>
            <person name="Gabel C."/>
            <person name="Fuchs M."/>
            <person name="Duesterhoeft A."/>
            <person name="Fritzc C."/>
            <person name="Holzer E."/>
            <person name="Moestl D."/>
            <person name="Hilbert H."/>
            <person name="Borzym K."/>
            <person name="Langer I."/>
            <person name="Beck A."/>
            <person name="Lehrach H."/>
            <person name="Reinhardt R."/>
            <person name="Pohl T.M."/>
            <person name="Eger P."/>
            <person name="Zimmermann W."/>
            <person name="Wedler H."/>
            <person name="Wambutt R."/>
            <person name="Purnelle B."/>
            <person name="Goffeau A."/>
            <person name="Cadieu E."/>
            <person name="Dreano S."/>
            <person name="Gloux S."/>
            <person name="Lelaure V."/>
            <person name="Mottier S."/>
            <person name="Galibert F."/>
            <person name="Aves S.J."/>
            <person name="Xiang Z."/>
            <person name="Hunt C."/>
            <person name="Moore K."/>
            <person name="Hurst S.M."/>
            <person name="Lucas M."/>
            <person name="Rochet M."/>
            <person name="Gaillardin C."/>
            <person name="Tallada V.A."/>
            <person name="Garzon A."/>
            <person name="Thode G."/>
            <person name="Daga R.R."/>
            <person name="Cruzado L."/>
            <person name="Jimenez J."/>
            <person name="Sanchez M."/>
            <person name="del Rey F."/>
            <person name="Benito J."/>
            <person name="Dominguez A."/>
            <person name="Revuelta J.L."/>
            <person name="Moreno S."/>
            <person name="Armstrong J."/>
            <person name="Forsburg S.L."/>
            <person name="Cerutti L."/>
            <person name="Lowe T."/>
            <person name="McCombie W.R."/>
            <person name="Paulsen I."/>
            <person name="Potashkin J."/>
            <person name="Shpakovski G.V."/>
            <person name="Ussery D."/>
            <person name="Barrell B.G."/>
            <person name="Nurse P."/>
        </authorList>
    </citation>
    <scope>NUCLEOTIDE SEQUENCE [LARGE SCALE GENOMIC DNA]</scope>
    <source>
        <strain>972 / ATCC 24843</strain>
    </source>
</reference>
<reference key="2">
    <citation type="journal article" date="2000" name="Genes Cells">
        <title>Large-scale screening of intracellular protein localization in living fission yeast cells by the use of a GFP-fusion genomic DNA library.</title>
        <authorList>
            <person name="Ding D.-Q."/>
            <person name="Tomita Y."/>
            <person name="Yamamoto A."/>
            <person name="Chikashige Y."/>
            <person name="Haraguchi T."/>
            <person name="Hiraoka Y."/>
        </authorList>
    </citation>
    <scope>NUCLEOTIDE SEQUENCE [LARGE SCALE GENOMIC DNA] OF 536-729</scope>
    <scope>SUBCELLULAR LOCATION</scope>
    <source>
        <strain>ATCC 38364 / 968</strain>
    </source>
</reference>
<reference key="3">
    <citation type="journal article" date="2006" name="Nat. Biotechnol.">
        <title>ORFeome cloning and global analysis of protein localization in the fission yeast Schizosaccharomyces pombe.</title>
        <authorList>
            <person name="Matsuyama A."/>
            <person name="Arai R."/>
            <person name="Yashiroda Y."/>
            <person name="Shirai A."/>
            <person name="Kamata A."/>
            <person name="Sekido S."/>
            <person name="Kobayashi Y."/>
            <person name="Hashimoto A."/>
            <person name="Hamamoto M."/>
            <person name="Hiraoka Y."/>
            <person name="Horinouchi S."/>
            <person name="Yoshida M."/>
        </authorList>
    </citation>
    <scope>SUBCELLULAR LOCATION [LARGE SCALE ANALYSIS]</scope>
</reference>
<name>DHX15_SCHPO</name>
<sequence length="735" mass="83804">MEPAQKKLRQESKNPYLAHLNNGDDSEEVVSSKGLTRRATTVAQAAKAEEGPNNFFNDKPFSQNYFKILETRRELPVYQQREEFLKIYHENQIIVFVGETGSGKTTQIPQFVLYDELPHLTNTQIACTQPRRVAAMSVAKRVADEMDVDLGEEVGYNIRFEDCSGPNTLLKYMTDGMLLREAMTDHMLSRYSCIILDEAHERTLATDILMGLMKRLATRRPDLKIIVMSATLDAKKFQKYFFDAPLLAVPGRTYPVEIYYTQEPERDYLEAALRTVLQIHVEEGPGDILVFLTGEEEIEDACRKITLEADDLVREGAAGPLKVYPLYGSLPPNQQQRIFEPTPEDTKSGYGRKVVISTNIAETSLTIDGIVYVVDPGFSKQKIYNPRIRVESLLVSPISKASAQQRAGRAGRTRPGKCFRLYTEEAFRKELIEQTYPEILRSNLSSTVLELKKLGIDDLVHFDYMDPPAPETMMRALEELNYLNCLDDNGDLTPLGRKASEFPLDPNLAVMLIRSPEFYCSNEVLSLTALLSVPNVFVRPNSARKLADEMRQQFTHPDGDHLTLLNVYHAYKSGEGTADWCWNHFLSHRALISADNVRKQLRRTMERQEVELISTPFDDKNYYVNIRRALVSGFFMQVAKKSANGKNYVTMKDNQVVSLHPSCGLSVTPEWVVYNEFVLTTKSFIRNVTAIRPEWLIELAPNYYDLDDFDNNKEVKSALQKVYQMAARSKKNARR</sequence>
<dbReference type="EC" id="3.6.4.13"/>
<dbReference type="EMBL" id="CU329671">
    <property type="protein sequence ID" value="CAA17908.1"/>
    <property type="molecule type" value="Genomic_DNA"/>
</dbReference>
<dbReference type="EMBL" id="AB027819">
    <property type="protein sequence ID" value="BAA87123.1"/>
    <property type="molecule type" value="Genomic_DNA"/>
</dbReference>
<dbReference type="PIR" id="T39615">
    <property type="entry name" value="T39615"/>
</dbReference>
<dbReference type="RefSeq" id="NP_595937.1">
    <property type="nucleotide sequence ID" value="NM_001021845.2"/>
</dbReference>
<dbReference type="SMR" id="O42945"/>
<dbReference type="BioGRID" id="276595">
    <property type="interactions" value="43"/>
</dbReference>
<dbReference type="FunCoup" id="O42945">
    <property type="interactions" value="1179"/>
</dbReference>
<dbReference type="IntAct" id="O42945">
    <property type="interactions" value="3"/>
</dbReference>
<dbReference type="STRING" id="284812.O42945"/>
<dbReference type="iPTMnet" id="O42945"/>
<dbReference type="PaxDb" id="4896-SPBC16H5.10c.1"/>
<dbReference type="EnsemblFungi" id="SPBC16H5.10c.1">
    <property type="protein sequence ID" value="SPBC16H5.10c.1:pep"/>
    <property type="gene ID" value="SPBC16H5.10c"/>
</dbReference>
<dbReference type="GeneID" id="2540057"/>
<dbReference type="KEGG" id="spo:2540057"/>
<dbReference type="PomBase" id="SPBC16H5.10c">
    <property type="gene designation" value="prp43"/>
</dbReference>
<dbReference type="VEuPathDB" id="FungiDB:SPBC16H5.10c"/>
<dbReference type="eggNOG" id="KOG0925">
    <property type="taxonomic scope" value="Eukaryota"/>
</dbReference>
<dbReference type="HOGENOM" id="CLU_001832_5_11_1"/>
<dbReference type="InParanoid" id="O42945"/>
<dbReference type="OMA" id="MKVYPLY"/>
<dbReference type="PhylomeDB" id="O42945"/>
<dbReference type="Reactome" id="R-SPO-72163">
    <property type="pathway name" value="mRNA Splicing - Major Pathway"/>
</dbReference>
<dbReference type="PRO" id="PR:O42945"/>
<dbReference type="Proteomes" id="UP000002485">
    <property type="component" value="Chromosome II"/>
</dbReference>
<dbReference type="GO" id="GO:0005634">
    <property type="term" value="C:nucleus"/>
    <property type="evidence" value="ECO:0007005"/>
    <property type="project" value="PomBase"/>
</dbReference>
<dbReference type="GO" id="GO:0071014">
    <property type="term" value="C:post-mRNA release spliceosomal complex"/>
    <property type="evidence" value="ECO:0000314"/>
    <property type="project" value="PomBase"/>
</dbReference>
<dbReference type="GO" id="GO:0005681">
    <property type="term" value="C:spliceosomal complex"/>
    <property type="evidence" value="ECO:0000314"/>
    <property type="project" value="PomBase"/>
</dbReference>
<dbReference type="GO" id="GO:0005684">
    <property type="term" value="C:U2-type spliceosomal complex"/>
    <property type="evidence" value="ECO:0000314"/>
    <property type="project" value="PomBase"/>
</dbReference>
<dbReference type="GO" id="GO:0005524">
    <property type="term" value="F:ATP binding"/>
    <property type="evidence" value="ECO:0007669"/>
    <property type="project" value="UniProtKB-KW"/>
</dbReference>
<dbReference type="GO" id="GO:0016887">
    <property type="term" value="F:ATP hydrolysis activity"/>
    <property type="evidence" value="ECO:0007669"/>
    <property type="project" value="RHEA"/>
</dbReference>
<dbReference type="GO" id="GO:0004386">
    <property type="term" value="F:helicase activity"/>
    <property type="evidence" value="ECO:0000318"/>
    <property type="project" value="GO_Central"/>
</dbReference>
<dbReference type="GO" id="GO:0003723">
    <property type="term" value="F:RNA binding"/>
    <property type="evidence" value="ECO:0000318"/>
    <property type="project" value="GO_Central"/>
</dbReference>
<dbReference type="GO" id="GO:0003724">
    <property type="term" value="F:RNA helicase activity"/>
    <property type="evidence" value="ECO:0000250"/>
    <property type="project" value="UniProtKB"/>
</dbReference>
<dbReference type="GO" id="GO:0045292">
    <property type="term" value="P:mRNA cis splicing, via spliceosome"/>
    <property type="evidence" value="ECO:0000269"/>
    <property type="project" value="PomBase"/>
</dbReference>
<dbReference type="GO" id="GO:0006364">
    <property type="term" value="P:rRNA processing"/>
    <property type="evidence" value="ECO:0000250"/>
    <property type="project" value="UniProtKB"/>
</dbReference>
<dbReference type="GO" id="GO:0000390">
    <property type="term" value="P:spliceosomal complex disassembly"/>
    <property type="evidence" value="ECO:0000353"/>
    <property type="project" value="PomBase"/>
</dbReference>
<dbReference type="CDD" id="cd17973">
    <property type="entry name" value="DEXHc_DHX15"/>
    <property type="match status" value="1"/>
</dbReference>
<dbReference type="CDD" id="cd18791">
    <property type="entry name" value="SF2_C_RHA"/>
    <property type="match status" value="1"/>
</dbReference>
<dbReference type="FunFam" id="3.40.50.300:FF:000007">
    <property type="entry name" value="Pre-mRNA-splicing factor ATP-dependent RNA helicase"/>
    <property type="match status" value="1"/>
</dbReference>
<dbReference type="FunFam" id="3.40.50.300:FF:000324">
    <property type="entry name" value="pre-mRNA-splicing factor ATP-dependent RNA helicase DHX15"/>
    <property type="match status" value="1"/>
</dbReference>
<dbReference type="FunFam" id="1.20.120.1080:FF:000003">
    <property type="entry name" value="Pre-mRNA-splicing factor ATP-dependent RNA helicase PRP43"/>
    <property type="match status" value="1"/>
</dbReference>
<dbReference type="Gene3D" id="1.20.120.1080">
    <property type="match status" value="1"/>
</dbReference>
<dbReference type="Gene3D" id="3.40.50.300">
    <property type="entry name" value="P-loop containing nucleotide triphosphate hydrolases"/>
    <property type="match status" value="2"/>
</dbReference>
<dbReference type="InterPro" id="IPR011709">
    <property type="entry name" value="DEAD-box_helicase_OB_fold"/>
</dbReference>
<dbReference type="InterPro" id="IPR011545">
    <property type="entry name" value="DEAD/DEAH_box_helicase_dom"/>
</dbReference>
<dbReference type="InterPro" id="IPR044756">
    <property type="entry name" value="DHX15_DEXHc"/>
</dbReference>
<dbReference type="InterPro" id="IPR002464">
    <property type="entry name" value="DNA/RNA_helicase_DEAH_CS"/>
</dbReference>
<dbReference type="InterPro" id="IPR048333">
    <property type="entry name" value="HA2_WH"/>
</dbReference>
<dbReference type="InterPro" id="IPR007502">
    <property type="entry name" value="Helicase-assoc_dom"/>
</dbReference>
<dbReference type="InterPro" id="IPR014001">
    <property type="entry name" value="Helicase_ATP-bd"/>
</dbReference>
<dbReference type="InterPro" id="IPR001650">
    <property type="entry name" value="Helicase_C-like"/>
</dbReference>
<dbReference type="InterPro" id="IPR027417">
    <property type="entry name" value="P-loop_NTPase"/>
</dbReference>
<dbReference type="PANTHER" id="PTHR18934">
    <property type="entry name" value="ATP-DEPENDENT RNA HELICASE"/>
    <property type="match status" value="1"/>
</dbReference>
<dbReference type="PANTHER" id="PTHR18934:SF109">
    <property type="entry name" value="ATP-DEPENDENT RNA HELICASE DHX15 HOMOLOG"/>
    <property type="match status" value="1"/>
</dbReference>
<dbReference type="Pfam" id="PF00270">
    <property type="entry name" value="DEAD"/>
    <property type="match status" value="1"/>
</dbReference>
<dbReference type="Pfam" id="PF21010">
    <property type="entry name" value="HA2_C"/>
    <property type="match status" value="1"/>
</dbReference>
<dbReference type="Pfam" id="PF04408">
    <property type="entry name" value="HA2_N"/>
    <property type="match status" value="1"/>
</dbReference>
<dbReference type="Pfam" id="PF00271">
    <property type="entry name" value="Helicase_C"/>
    <property type="match status" value="1"/>
</dbReference>
<dbReference type="Pfam" id="PF07717">
    <property type="entry name" value="OB_NTP_bind"/>
    <property type="match status" value="1"/>
</dbReference>
<dbReference type="SMART" id="SM00487">
    <property type="entry name" value="DEXDc"/>
    <property type="match status" value="1"/>
</dbReference>
<dbReference type="SMART" id="SM00847">
    <property type="entry name" value="HA2"/>
    <property type="match status" value="1"/>
</dbReference>
<dbReference type="SMART" id="SM00490">
    <property type="entry name" value="HELICc"/>
    <property type="match status" value="1"/>
</dbReference>
<dbReference type="SUPFAM" id="SSF52540">
    <property type="entry name" value="P-loop containing nucleoside triphosphate hydrolases"/>
    <property type="match status" value="1"/>
</dbReference>
<dbReference type="PROSITE" id="PS00690">
    <property type="entry name" value="DEAH_ATP_HELICASE"/>
    <property type="match status" value="1"/>
</dbReference>
<dbReference type="PROSITE" id="PS51192">
    <property type="entry name" value="HELICASE_ATP_BIND_1"/>
    <property type="match status" value="1"/>
</dbReference>
<dbReference type="PROSITE" id="PS51194">
    <property type="entry name" value="HELICASE_CTER"/>
    <property type="match status" value="1"/>
</dbReference>
<organism>
    <name type="scientific">Schizosaccharomyces pombe (strain 972 / ATCC 24843)</name>
    <name type="common">Fission yeast</name>
    <dbReference type="NCBI Taxonomy" id="284812"/>
    <lineage>
        <taxon>Eukaryota</taxon>
        <taxon>Fungi</taxon>
        <taxon>Dikarya</taxon>
        <taxon>Ascomycota</taxon>
        <taxon>Taphrinomycotina</taxon>
        <taxon>Schizosaccharomycetes</taxon>
        <taxon>Schizosaccharomycetales</taxon>
        <taxon>Schizosaccharomycetaceae</taxon>
        <taxon>Schizosaccharomyces</taxon>
    </lineage>
</organism>
<accession>O42945</accession>
<accession>Q9USE5</accession>
<feature type="chain" id="PRO_0000055144" description="Probable pre-mRNA-splicing factor ATP-dependent RNA helicase prp43">
    <location>
        <begin position="1"/>
        <end position="735"/>
    </location>
</feature>
<feature type="domain" description="Helicase ATP-binding" evidence="2">
    <location>
        <begin position="85"/>
        <end position="250"/>
    </location>
</feature>
<feature type="domain" description="Helicase C-terminal" evidence="3">
    <location>
        <begin position="275"/>
        <end position="455"/>
    </location>
</feature>
<feature type="region of interest" description="Disordered" evidence="4">
    <location>
        <begin position="1"/>
        <end position="34"/>
    </location>
</feature>
<feature type="short sequence motif" description="DEAH box">
    <location>
        <begin position="197"/>
        <end position="200"/>
    </location>
</feature>
<feature type="compositionally biased region" description="Basic and acidic residues" evidence="4">
    <location>
        <begin position="1"/>
        <end position="12"/>
    </location>
</feature>
<feature type="binding site" evidence="2">
    <location>
        <begin position="98"/>
        <end position="105"/>
    </location>
    <ligand>
        <name>ATP</name>
        <dbReference type="ChEBI" id="CHEBI:30616"/>
    </ligand>
</feature>
<proteinExistence type="inferred from homology"/>